<reference key="1">
    <citation type="journal article" date="2009" name="J. Bacteriol.">
        <title>Complete genome sequence of the extremophilic Bacillus cereus strain Q1 with industrial applications.</title>
        <authorList>
            <person name="Xiong Z."/>
            <person name="Jiang Y."/>
            <person name="Qi D."/>
            <person name="Lu H."/>
            <person name="Yang F."/>
            <person name="Yang J."/>
            <person name="Chen L."/>
            <person name="Sun L."/>
            <person name="Xu X."/>
            <person name="Xue Y."/>
            <person name="Zhu Y."/>
            <person name="Jin Q."/>
        </authorList>
    </citation>
    <scope>NUCLEOTIDE SEQUENCE [LARGE SCALE GENOMIC DNA]</scope>
    <source>
        <strain>Q1</strain>
    </source>
</reference>
<gene>
    <name evidence="1" type="primary">rpmJ</name>
    <name type="ordered locus">BCQ_0147</name>
</gene>
<sequence length="37" mass="4333">MKVRPSVKPICEKCKVIRRRGKVMVICENPKHKQKQG</sequence>
<name>RL36_BACCQ</name>
<accession>B9IZL8</accession>
<keyword id="KW-0687">Ribonucleoprotein</keyword>
<keyword id="KW-0689">Ribosomal protein</keyword>
<protein>
    <recommendedName>
        <fullName evidence="1">Large ribosomal subunit protein bL36</fullName>
    </recommendedName>
    <alternativeName>
        <fullName evidence="2">50S ribosomal protein L36</fullName>
    </alternativeName>
</protein>
<evidence type="ECO:0000255" key="1">
    <source>
        <dbReference type="HAMAP-Rule" id="MF_00251"/>
    </source>
</evidence>
<evidence type="ECO:0000305" key="2"/>
<comment type="similarity">
    <text evidence="1">Belongs to the bacterial ribosomal protein bL36 family.</text>
</comment>
<dbReference type="EMBL" id="CP000227">
    <property type="protein sequence ID" value="ACM10662.1"/>
    <property type="molecule type" value="Genomic_DNA"/>
</dbReference>
<dbReference type="SMR" id="B9IZL8"/>
<dbReference type="KEGG" id="bcq:BCQ_0147"/>
<dbReference type="HOGENOM" id="CLU_135723_6_2_9"/>
<dbReference type="Proteomes" id="UP000000441">
    <property type="component" value="Chromosome"/>
</dbReference>
<dbReference type="GO" id="GO:0005737">
    <property type="term" value="C:cytoplasm"/>
    <property type="evidence" value="ECO:0007669"/>
    <property type="project" value="UniProtKB-ARBA"/>
</dbReference>
<dbReference type="GO" id="GO:1990904">
    <property type="term" value="C:ribonucleoprotein complex"/>
    <property type="evidence" value="ECO:0007669"/>
    <property type="project" value="UniProtKB-KW"/>
</dbReference>
<dbReference type="GO" id="GO:0005840">
    <property type="term" value="C:ribosome"/>
    <property type="evidence" value="ECO:0007669"/>
    <property type="project" value="UniProtKB-KW"/>
</dbReference>
<dbReference type="GO" id="GO:0003735">
    <property type="term" value="F:structural constituent of ribosome"/>
    <property type="evidence" value="ECO:0007669"/>
    <property type="project" value="InterPro"/>
</dbReference>
<dbReference type="GO" id="GO:0006412">
    <property type="term" value="P:translation"/>
    <property type="evidence" value="ECO:0007669"/>
    <property type="project" value="UniProtKB-UniRule"/>
</dbReference>
<dbReference type="HAMAP" id="MF_00251">
    <property type="entry name" value="Ribosomal_bL36"/>
    <property type="match status" value="1"/>
</dbReference>
<dbReference type="InterPro" id="IPR000473">
    <property type="entry name" value="Ribosomal_bL36"/>
</dbReference>
<dbReference type="InterPro" id="IPR035977">
    <property type="entry name" value="Ribosomal_bL36_sp"/>
</dbReference>
<dbReference type="NCBIfam" id="TIGR01022">
    <property type="entry name" value="rpmJ_bact"/>
    <property type="match status" value="1"/>
</dbReference>
<dbReference type="PANTHER" id="PTHR42888">
    <property type="entry name" value="50S RIBOSOMAL PROTEIN L36, CHLOROPLASTIC"/>
    <property type="match status" value="1"/>
</dbReference>
<dbReference type="PANTHER" id="PTHR42888:SF1">
    <property type="entry name" value="LARGE RIBOSOMAL SUBUNIT PROTEIN BL36C"/>
    <property type="match status" value="1"/>
</dbReference>
<dbReference type="Pfam" id="PF00444">
    <property type="entry name" value="Ribosomal_L36"/>
    <property type="match status" value="1"/>
</dbReference>
<dbReference type="SUPFAM" id="SSF57840">
    <property type="entry name" value="Ribosomal protein L36"/>
    <property type="match status" value="1"/>
</dbReference>
<dbReference type="PROSITE" id="PS00828">
    <property type="entry name" value="RIBOSOMAL_L36"/>
    <property type="match status" value="1"/>
</dbReference>
<organism>
    <name type="scientific">Bacillus cereus (strain Q1)</name>
    <dbReference type="NCBI Taxonomy" id="361100"/>
    <lineage>
        <taxon>Bacteria</taxon>
        <taxon>Bacillati</taxon>
        <taxon>Bacillota</taxon>
        <taxon>Bacilli</taxon>
        <taxon>Bacillales</taxon>
        <taxon>Bacillaceae</taxon>
        <taxon>Bacillus</taxon>
        <taxon>Bacillus cereus group</taxon>
    </lineage>
</organism>
<feature type="chain" id="PRO_1000196168" description="Large ribosomal subunit protein bL36">
    <location>
        <begin position="1"/>
        <end position="37"/>
    </location>
</feature>
<proteinExistence type="inferred from homology"/>